<evidence type="ECO:0000255" key="1">
    <source>
        <dbReference type="HAMAP-Rule" id="MF_00302"/>
    </source>
</evidence>
<dbReference type="EMBL" id="AE016795">
    <property type="protein sequence ID" value="AAO10507.2"/>
    <property type="molecule type" value="Genomic_DNA"/>
</dbReference>
<dbReference type="RefSeq" id="WP_011080003.1">
    <property type="nucleotide sequence ID" value="NC_004459.3"/>
</dbReference>
<dbReference type="SMR" id="Q8DAS0"/>
<dbReference type="GeneID" id="93896318"/>
<dbReference type="KEGG" id="vvu:VV1_2120"/>
<dbReference type="HOGENOM" id="CLU_134358_2_1_6"/>
<dbReference type="Proteomes" id="UP000002275">
    <property type="component" value="Chromosome 1"/>
</dbReference>
<dbReference type="GO" id="GO:0030163">
    <property type="term" value="P:protein catabolic process"/>
    <property type="evidence" value="ECO:0007669"/>
    <property type="project" value="InterPro"/>
</dbReference>
<dbReference type="GO" id="GO:0006508">
    <property type="term" value="P:proteolysis"/>
    <property type="evidence" value="ECO:0007669"/>
    <property type="project" value="UniProtKB-UniRule"/>
</dbReference>
<dbReference type="FunFam" id="3.30.1390.10:FF:000002">
    <property type="entry name" value="ATP-dependent Clp protease adapter protein ClpS"/>
    <property type="match status" value="1"/>
</dbReference>
<dbReference type="Gene3D" id="3.30.1390.10">
    <property type="match status" value="1"/>
</dbReference>
<dbReference type="HAMAP" id="MF_00302">
    <property type="entry name" value="ClpS"/>
    <property type="match status" value="1"/>
</dbReference>
<dbReference type="InterPro" id="IPR022935">
    <property type="entry name" value="ClpS"/>
</dbReference>
<dbReference type="InterPro" id="IPR003769">
    <property type="entry name" value="ClpS_core"/>
</dbReference>
<dbReference type="InterPro" id="IPR014719">
    <property type="entry name" value="Ribosomal_bL12_C/ClpS-like"/>
</dbReference>
<dbReference type="NCBIfam" id="NF000670">
    <property type="entry name" value="PRK00033.1-3"/>
    <property type="match status" value="1"/>
</dbReference>
<dbReference type="NCBIfam" id="NF000672">
    <property type="entry name" value="PRK00033.1-5"/>
    <property type="match status" value="1"/>
</dbReference>
<dbReference type="PANTHER" id="PTHR33473:SF19">
    <property type="entry name" value="ATP-DEPENDENT CLP PROTEASE ADAPTER PROTEIN CLPS"/>
    <property type="match status" value="1"/>
</dbReference>
<dbReference type="PANTHER" id="PTHR33473">
    <property type="entry name" value="ATP-DEPENDENT CLP PROTEASE ADAPTER PROTEIN CLPS1, CHLOROPLASTIC"/>
    <property type="match status" value="1"/>
</dbReference>
<dbReference type="Pfam" id="PF02617">
    <property type="entry name" value="ClpS"/>
    <property type="match status" value="1"/>
</dbReference>
<dbReference type="SUPFAM" id="SSF54736">
    <property type="entry name" value="ClpS-like"/>
    <property type="match status" value="1"/>
</dbReference>
<reference key="1">
    <citation type="submission" date="2002-12" db="EMBL/GenBank/DDBJ databases">
        <title>Complete genome sequence of Vibrio vulnificus CMCP6.</title>
        <authorList>
            <person name="Rhee J.H."/>
            <person name="Kim S.Y."/>
            <person name="Chung S.S."/>
            <person name="Kim J.J."/>
            <person name="Moon Y.H."/>
            <person name="Jeong H."/>
            <person name="Choy H.E."/>
        </authorList>
    </citation>
    <scope>NUCLEOTIDE SEQUENCE [LARGE SCALE GENOMIC DNA]</scope>
    <source>
        <strain>CMCP6</strain>
    </source>
</reference>
<reference key="2">
    <citation type="journal article" date="2011" name="Mol. Syst. Biol.">
        <title>Integrative genome-scale metabolic analysis of Vibrio vulnificus for drug targeting and discovery.</title>
        <authorList>
            <person name="Kim H.U."/>
            <person name="Kim S.Y."/>
            <person name="Jeong H."/>
            <person name="Kim T.Y."/>
            <person name="Kim J.J."/>
            <person name="Choy H.E."/>
            <person name="Yi K.Y."/>
            <person name="Rhee J.H."/>
            <person name="Lee S.Y."/>
        </authorList>
    </citation>
    <scope>SEQUENCE REVISION TO 56</scope>
    <source>
        <strain>CMCP6</strain>
    </source>
</reference>
<proteinExistence type="inferred from homology"/>
<comment type="function">
    <text evidence="1">Involved in the modulation of the specificity of the ClpAP-mediated ATP-dependent protein degradation.</text>
</comment>
<comment type="subunit">
    <text evidence="1">Binds to the N-terminal domain of the chaperone ClpA.</text>
</comment>
<comment type="similarity">
    <text evidence="1">Belongs to the ClpS family.</text>
</comment>
<sequence>MSKNFEWITPDSDLLEKEITQIQPPKKYNVVLNNDDYTPMDFVIDVLERFFSHDLDKATQIMLKVHYEGKAICGTYSAEIAETKVAQVTMYSRENEHPLLCTMEQA</sequence>
<name>CLPS_VIBVU</name>
<accession>Q8DAS0</accession>
<gene>
    <name evidence="1" type="primary">clpS</name>
    <name type="ordered locus">VV1_2120</name>
</gene>
<feature type="chain" id="PRO_0000215759" description="ATP-dependent Clp protease adapter protein ClpS">
    <location>
        <begin position="1"/>
        <end position="106"/>
    </location>
</feature>
<protein>
    <recommendedName>
        <fullName evidence="1">ATP-dependent Clp protease adapter protein ClpS</fullName>
    </recommendedName>
</protein>
<organism>
    <name type="scientific">Vibrio vulnificus (strain CMCP6)</name>
    <dbReference type="NCBI Taxonomy" id="216895"/>
    <lineage>
        <taxon>Bacteria</taxon>
        <taxon>Pseudomonadati</taxon>
        <taxon>Pseudomonadota</taxon>
        <taxon>Gammaproteobacteria</taxon>
        <taxon>Vibrionales</taxon>
        <taxon>Vibrionaceae</taxon>
        <taxon>Vibrio</taxon>
    </lineage>
</organism>